<feature type="chain" id="PRO_0000103953" description="Uncharacterized protein Rv2082">
    <location>
        <begin position="1"/>
        <end position="721"/>
    </location>
</feature>
<feature type="region of interest" description="Disordered" evidence="1">
    <location>
        <begin position="196"/>
        <end position="291"/>
    </location>
</feature>
<feature type="region of interest" description="Disordered" evidence="1">
    <location>
        <begin position="370"/>
        <end position="513"/>
    </location>
</feature>
<feature type="compositionally biased region" description="Low complexity" evidence="1">
    <location>
        <begin position="202"/>
        <end position="224"/>
    </location>
</feature>
<feature type="compositionally biased region" description="Low complexity" evidence="1">
    <location>
        <begin position="232"/>
        <end position="250"/>
    </location>
</feature>
<feature type="compositionally biased region" description="Pro residues" evidence="1">
    <location>
        <begin position="264"/>
        <end position="283"/>
    </location>
</feature>
<feature type="compositionally biased region" description="Pro residues" evidence="1">
    <location>
        <begin position="379"/>
        <end position="389"/>
    </location>
</feature>
<feature type="compositionally biased region" description="Low complexity" evidence="1">
    <location>
        <begin position="419"/>
        <end position="429"/>
    </location>
</feature>
<feature type="compositionally biased region" description="Pro residues" evidence="1">
    <location>
        <begin position="435"/>
        <end position="446"/>
    </location>
</feature>
<feature type="compositionally biased region" description="Polar residues" evidence="1">
    <location>
        <begin position="470"/>
        <end position="484"/>
    </location>
</feature>
<feature type="compositionally biased region" description="Low complexity" evidence="1">
    <location>
        <begin position="491"/>
        <end position="505"/>
    </location>
</feature>
<evidence type="ECO:0000256" key="1">
    <source>
        <dbReference type="SAM" id="MobiDB-lite"/>
    </source>
</evidence>
<keyword id="KW-1185">Reference proteome</keyword>
<proteinExistence type="evidence at protein level"/>
<name>Y2082_MYCTU</name>
<organism>
    <name type="scientific">Mycobacterium tuberculosis (strain ATCC 25618 / H37Rv)</name>
    <dbReference type="NCBI Taxonomy" id="83332"/>
    <lineage>
        <taxon>Bacteria</taxon>
        <taxon>Bacillati</taxon>
        <taxon>Actinomycetota</taxon>
        <taxon>Actinomycetes</taxon>
        <taxon>Mycobacteriales</taxon>
        <taxon>Mycobacteriaceae</taxon>
        <taxon>Mycobacterium</taxon>
        <taxon>Mycobacterium tuberculosis complex</taxon>
    </lineage>
</organism>
<protein>
    <recommendedName>
        <fullName>Uncharacterized protein Rv2082</fullName>
    </recommendedName>
</protein>
<dbReference type="EMBL" id="AL123456">
    <property type="protein sequence ID" value="CCP44857.1"/>
    <property type="molecule type" value="Genomic_DNA"/>
</dbReference>
<dbReference type="PIR" id="E70766">
    <property type="entry name" value="E70766"/>
</dbReference>
<dbReference type="RefSeq" id="NP_216598.1">
    <property type="nucleotide sequence ID" value="NC_000962.3"/>
</dbReference>
<dbReference type="RefSeq" id="WP_003911763.1">
    <property type="nucleotide sequence ID" value="NZ_KK339370.1"/>
</dbReference>
<dbReference type="SMR" id="Q10690"/>
<dbReference type="STRING" id="83332.Rv2082"/>
<dbReference type="PaxDb" id="83332-Rv2082"/>
<dbReference type="DNASU" id="887795"/>
<dbReference type="GeneID" id="887795"/>
<dbReference type="KEGG" id="mtu:Rv2082"/>
<dbReference type="KEGG" id="mtv:RVBD_2082"/>
<dbReference type="PATRIC" id="fig|83332.111.peg.2323"/>
<dbReference type="TubercuList" id="Rv2082"/>
<dbReference type="eggNOG" id="ENOG5030Q2E">
    <property type="taxonomic scope" value="Bacteria"/>
</dbReference>
<dbReference type="InParanoid" id="Q10690"/>
<dbReference type="OrthoDB" id="4764211at2"/>
<dbReference type="Proteomes" id="UP000001584">
    <property type="component" value="Chromosome"/>
</dbReference>
<dbReference type="GO" id="GO:0052167">
    <property type="term" value="P:symbiont-mediated perturbation of host innate immune response"/>
    <property type="evidence" value="ECO:0000314"/>
    <property type="project" value="MTBBASE"/>
</dbReference>
<dbReference type="InterPro" id="IPR040833">
    <property type="entry name" value="DUF5631"/>
</dbReference>
<dbReference type="InterPro" id="IPR040604">
    <property type="entry name" value="DUF5632"/>
</dbReference>
<dbReference type="Pfam" id="PF18645">
    <property type="entry name" value="DUF5631"/>
    <property type="match status" value="1"/>
</dbReference>
<dbReference type="Pfam" id="PF18646">
    <property type="entry name" value="DUF5632"/>
    <property type="match status" value="1"/>
</dbReference>
<gene>
    <name type="ordered locus">Rv2082</name>
    <name type="ORF">MTCY49.21</name>
</gene>
<sequence>MAGDLPPGRWSALLVGAWWPARPDAPMAGVTYWRKAAQLKRNEANDLRNERSLLAVNQGRTADDLLERYWRGEQRLATIAHQCEVKSDQSEQVADAVNYLRDRLTEIAQSGNQQINQILAGKGPIEAKVAAVNAVIEQSNAMADHVGATAMSNIIDATQRVFDETIGGDAHTWLRDHGVSLDTPARPRPVTAEDMTSMTANSPAGSPFGAAPSAPSHSTTTSGPPTAPTPTSPFGTAPMVLSSSSTSSGPPTAPTPTSPFGTAPMPPGPPPPGTVSPPLPPSAPAVGVGGPSVPAAGMPPAAAAATAPLSPQSLGQSFTTGMTTGTPAAAGAQALSAGALHAATEPLPPPAPPPTTPTVTTPTVATATTAGIPHIPDSAPTPSPAPIAPPTTDNASAMTPIAPMVANGPPASPAPPAAAPAGPLPAYGADLRPPVTTPPATPPTPTGPISGAAVTPSSPAAGGSLMSPVVNKSTAPATTQAQPSNPTPPLASATAAATTGAAAGDTSRRAAEQQRLRRILDTVARQEPGLSWAAGLRDNGQTTLLVTDLASGWIPPHIRLPAHITLLEPAPRRRHATVTDLLGTTTVAAAHHPHGYLSQPDPDTPALTGDRTARIAPTIDELGPTLVETVRRHDTLPPIAQAVVVAATRNYGVPDNETDLLHHKTTEIHQAVLTTYPNHDIATVVDWMLLAAINALIAGDQSGANYHLAWAIAAISTRRSR</sequence>
<reference key="1">
    <citation type="journal article" date="1998" name="Nature">
        <title>Deciphering the biology of Mycobacterium tuberculosis from the complete genome sequence.</title>
        <authorList>
            <person name="Cole S.T."/>
            <person name="Brosch R."/>
            <person name="Parkhill J."/>
            <person name="Garnier T."/>
            <person name="Churcher C.M."/>
            <person name="Harris D.E."/>
            <person name="Gordon S.V."/>
            <person name="Eiglmeier K."/>
            <person name="Gas S."/>
            <person name="Barry C.E. III"/>
            <person name="Tekaia F."/>
            <person name="Badcock K."/>
            <person name="Basham D."/>
            <person name="Brown D."/>
            <person name="Chillingworth T."/>
            <person name="Connor R."/>
            <person name="Davies R.M."/>
            <person name="Devlin K."/>
            <person name="Feltwell T."/>
            <person name="Gentles S."/>
            <person name="Hamlin N."/>
            <person name="Holroyd S."/>
            <person name="Hornsby T."/>
            <person name="Jagels K."/>
            <person name="Krogh A."/>
            <person name="McLean J."/>
            <person name="Moule S."/>
            <person name="Murphy L.D."/>
            <person name="Oliver S."/>
            <person name="Osborne J."/>
            <person name="Quail M.A."/>
            <person name="Rajandream M.A."/>
            <person name="Rogers J."/>
            <person name="Rutter S."/>
            <person name="Seeger K."/>
            <person name="Skelton S."/>
            <person name="Squares S."/>
            <person name="Squares R."/>
            <person name="Sulston J.E."/>
            <person name="Taylor K."/>
            <person name="Whitehead S."/>
            <person name="Barrell B.G."/>
        </authorList>
    </citation>
    <scope>NUCLEOTIDE SEQUENCE [LARGE SCALE GENOMIC DNA]</scope>
    <source>
        <strain>ATCC 25618 / H37Rv</strain>
    </source>
</reference>
<reference key="2">
    <citation type="journal article" date="2011" name="Mol. Cell. Proteomics">
        <title>Proteogenomic analysis of Mycobacterium tuberculosis by high resolution mass spectrometry.</title>
        <authorList>
            <person name="Kelkar D.S."/>
            <person name="Kumar D."/>
            <person name="Kumar P."/>
            <person name="Balakrishnan L."/>
            <person name="Muthusamy B."/>
            <person name="Yadav A.K."/>
            <person name="Shrivastava P."/>
            <person name="Marimuthu A."/>
            <person name="Anand S."/>
            <person name="Sundaram H."/>
            <person name="Kingsbury R."/>
            <person name="Harsha H.C."/>
            <person name="Nair B."/>
            <person name="Prasad T.S."/>
            <person name="Chauhan D.S."/>
            <person name="Katoch K."/>
            <person name="Katoch V.M."/>
            <person name="Kumar P."/>
            <person name="Chaerkady R."/>
            <person name="Ramachandran S."/>
            <person name="Dash D."/>
            <person name="Pandey A."/>
        </authorList>
    </citation>
    <scope>IDENTIFICATION BY MASS SPECTROMETRY [LARGE SCALE ANALYSIS]</scope>
    <source>
        <strain>ATCC 25618 / H37Rv</strain>
    </source>
</reference>
<accession>Q10690</accession>
<accession>L0T8K5</accession>